<evidence type="ECO:0000250" key="1"/>
<evidence type="ECO:0000250" key="2">
    <source>
        <dbReference type="UniProtKB" id="P97391"/>
    </source>
</evidence>
<evidence type="ECO:0000255" key="3"/>
<evidence type="ECO:0000255" key="4">
    <source>
        <dbReference type="PROSITE-ProRule" id="PRU10035"/>
    </source>
</evidence>
<evidence type="ECO:0000255" key="5">
    <source>
        <dbReference type="PROSITE-ProRule" id="PRU10036"/>
    </source>
</evidence>
<evidence type="ECO:0000269" key="6">
    <source>
    </source>
</evidence>
<evidence type="ECO:0000269" key="7">
    <source>
    </source>
</evidence>
<evidence type="ECO:0000269" key="8">
    <source>
    </source>
</evidence>
<evidence type="ECO:0000269" key="9">
    <source>
    </source>
</evidence>
<evidence type="ECO:0000269" key="10">
    <source>
    </source>
</evidence>
<evidence type="ECO:0000269" key="11">
    <source>
    </source>
</evidence>
<evidence type="ECO:0000269" key="12">
    <source>
    </source>
</evidence>
<evidence type="ECO:0000269" key="13">
    <source>
    </source>
</evidence>
<evidence type="ECO:0000269" key="14">
    <source>
    </source>
</evidence>
<evidence type="ECO:0000305" key="15"/>
<evidence type="ECO:0000305" key="16">
    <source>
    </source>
</evidence>
<evidence type="ECO:0000305" key="17">
    <source>
    </source>
</evidence>
<evidence type="ECO:0000305" key="18">
    <source>
    </source>
</evidence>
<comment type="function">
    <text evidence="2 6 7 8 9 11 13 14">Secretory calcium-dependent phospholipase A2 that primarily targets extracellular phospholipids (PubMed:8300559). Hydrolyzes the ester bond of the fatty acyl group attached at sn-2 position of phospholipids (phospholipase A2 activity), preferentially releasing fatty acyl groups with a low degree of unsaturation such as oleoyl (C18:1) and linoleoyl (C18:2) groups (PubMed:14998370, PubMed:23533611, PubMed:8300559). Hydrolyzes low-density lipoprotein (LDL) phospholipids releasing unsaturated fatty acids that drive macrophage polarization toward an M2 phenotype (By similarity). May act in an autocrine and paracrine manner. Contributes to lipid remodeling of cellular membranes at different subcellular locations and generation of lipid mediators involved in pathogen clearance. Cleaves sn-2 fatty acyl chains of cardiolipin, a major component of the inner membrane of mitochondria and bacterial membranes (PubMed:23533611). Promotes phagocytosis of bacteria in macrophages through production of lysophosphatidylethanolamines (PubMed:25725101). Displays bactericidal activity against Gram-positive bacteria by directly hydrolyzing phospholipids of the bacterial membrane (PubMed:11694541). Promotes phagocytosis and killing of ingested fungi likely through controlling phagosome-lysosome fusion and phagosome maturation (By similarity). Plays a role in biosynthesis of cysteinyl leukotrienes (CysLTs) in myeloid cells (PubMed:12124392, PubMed:12796497). In eosinophils, triggers perinuclear arachidonate release and LTC4 synthesis in a PLA2G4A-independent way (PubMed:12796497). In neutrophils, amplifies CysLTs biosynthesis initiated by PLA2G4A (PubMed:12124392). Promotes immune complex clearance in macrophages via stimulating synthesis of CysLTs, which act through CYSLTR1 to trigger phagocytosis (By similarity). May regulate antigen processing in antigen-presenting cells (By similarity). In pulmonary macrophages regulates IL33 production required for activation of group 2 innate lymphoid cells (By similarity). May play a role in the biosynthesis of N-acyl ethanolamines that regulate energy metabolism. Hydrolyzes N-acyl phosphatidylethanolamines to N-acyl lysophosphatidylethanolamines, which are further cleaved by a lysophospholipase D to release N-acyl ethanolamines (PubMed:14998370).</text>
</comment>
<comment type="catalytic activity">
    <reaction evidence="4 5 11 14">
        <text>a 1,2-diacyl-sn-glycero-3-phosphocholine + H2O = a 1-acyl-sn-glycero-3-phosphocholine + a fatty acid + H(+)</text>
        <dbReference type="Rhea" id="RHEA:15801"/>
        <dbReference type="ChEBI" id="CHEBI:15377"/>
        <dbReference type="ChEBI" id="CHEBI:15378"/>
        <dbReference type="ChEBI" id="CHEBI:28868"/>
        <dbReference type="ChEBI" id="CHEBI:57643"/>
        <dbReference type="ChEBI" id="CHEBI:58168"/>
        <dbReference type="EC" id="3.1.1.4"/>
    </reaction>
    <physiologicalReaction direction="left-to-right" evidence="17 18">
        <dbReference type="Rhea" id="RHEA:15802"/>
    </physiologicalReaction>
</comment>
<comment type="catalytic activity">
    <reaction evidence="11 14">
        <text>1-hexadecanoyl-2-(9Z-octadecenoyl)-sn-glycero-3-phosphocholine + H2O = 1-hexadecanoyl-sn-glycero-3-phosphocholine + (9Z)-octadecenoate + H(+)</text>
        <dbReference type="Rhea" id="RHEA:38779"/>
        <dbReference type="ChEBI" id="CHEBI:15377"/>
        <dbReference type="ChEBI" id="CHEBI:15378"/>
        <dbReference type="ChEBI" id="CHEBI:30823"/>
        <dbReference type="ChEBI" id="CHEBI:72998"/>
        <dbReference type="ChEBI" id="CHEBI:73001"/>
    </reaction>
    <physiologicalReaction direction="left-to-right" evidence="17 18">
        <dbReference type="Rhea" id="RHEA:38780"/>
    </physiologicalReaction>
</comment>
<comment type="catalytic activity">
    <reaction evidence="11 14">
        <text>1-hexadecanoyl-2-(5Z,8Z,11Z,14Z-eicosatetraenoyl)-sn-glycero-3-phosphocholine + H2O = 1-hexadecanoyl-sn-glycero-3-phosphocholine + (5Z,8Z,11Z,14Z)-eicosatetraenoate + H(+)</text>
        <dbReference type="Rhea" id="RHEA:40427"/>
        <dbReference type="ChEBI" id="CHEBI:15377"/>
        <dbReference type="ChEBI" id="CHEBI:15378"/>
        <dbReference type="ChEBI" id="CHEBI:32395"/>
        <dbReference type="ChEBI" id="CHEBI:72998"/>
        <dbReference type="ChEBI" id="CHEBI:73003"/>
    </reaction>
    <physiologicalReaction direction="left-to-right" evidence="17 18">
        <dbReference type="Rhea" id="RHEA:40428"/>
    </physiologicalReaction>
</comment>
<comment type="catalytic activity">
    <reaction evidence="9">
        <text>1-hexadecanoyl-2-(9Z,12Z-octadecadienoyl)-sn-glycero-3-phosphoethanolamine + H2O = 1-hexadecanoyl-sn-glycero-3-phosphoethanolamine + (9Z,12Z)-octadecadienoate + H(+)</text>
        <dbReference type="Rhea" id="RHEA:40815"/>
        <dbReference type="ChEBI" id="CHEBI:15377"/>
        <dbReference type="ChEBI" id="CHEBI:15378"/>
        <dbReference type="ChEBI" id="CHEBI:30245"/>
        <dbReference type="ChEBI" id="CHEBI:73004"/>
        <dbReference type="ChEBI" id="CHEBI:73008"/>
    </reaction>
    <physiologicalReaction direction="left-to-right" evidence="16">
        <dbReference type="Rhea" id="RHEA:40816"/>
    </physiologicalReaction>
</comment>
<comment type="catalytic activity">
    <reaction evidence="14">
        <text>1-hexadecanoyl-2-(5Z,8Z,11Z,14Z-eicosatetraenoyl)-sn-glycero-3-phosphoethanolamine + H2O = 1-hexadecanoyl-sn-glycero-3-phosphoethanolamine + (5Z,8Z,11Z,14Z)-eicosatetraenoate + H(+)</text>
        <dbReference type="Rhea" id="RHEA:40431"/>
        <dbReference type="ChEBI" id="CHEBI:15377"/>
        <dbReference type="ChEBI" id="CHEBI:15378"/>
        <dbReference type="ChEBI" id="CHEBI:32395"/>
        <dbReference type="ChEBI" id="CHEBI:73004"/>
        <dbReference type="ChEBI" id="CHEBI:73009"/>
    </reaction>
    <physiologicalReaction direction="left-to-right" evidence="18">
        <dbReference type="Rhea" id="RHEA:40432"/>
    </physiologicalReaction>
</comment>
<comment type="catalytic activity">
    <reaction evidence="14">
        <text>1-octadecanoyl-2-(5Z,8Z,11Z,14Z-eicosatetraenoyl)-sn-glycero-3-phospho-(1D-myo-inositol) + H2O = 1-octadecanoyl-sn-glycero-3-phospho-(1D-myo-inositol) + (5Z,8Z,11Z,14Z)-eicosatetraenoate + H(+)</text>
        <dbReference type="Rhea" id="RHEA:41215"/>
        <dbReference type="ChEBI" id="CHEBI:15377"/>
        <dbReference type="ChEBI" id="CHEBI:15378"/>
        <dbReference type="ChEBI" id="CHEBI:32395"/>
        <dbReference type="ChEBI" id="CHEBI:74243"/>
        <dbReference type="ChEBI" id="CHEBI:133606"/>
    </reaction>
    <physiologicalReaction direction="left-to-right" evidence="18">
        <dbReference type="Rhea" id="RHEA:41216"/>
    </physiologicalReaction>
</comment>
<comment type="catalytic activity">
    <reaction evidence="2">
        <text>1-hexadecanoyl-2-(9Z-octadecenoyl)-sn-glycero-3-phosphoglycerol + H2O = 1-hexadecanoyl-sn-glycero-3-phosphoglycerol + (9Z)-octadecenoate + H(+)</text>
        <dbReference type="Rhea" id="RHEA:44524"/>
        <dbReference type="ChEBI" id="CHEBI:15377"/>
        <dbReference type="ChEBI" id="CHEBI:15378"/>
        <dbReference type="ChEBI" id="CHEBI:30823"/>
        <dbReference type="ChEBI" id="CHEBI:84472"/>
        <dbReference type="ChEBI" id="CHEBI:84475"/>
    </reaction>
    <physiologicalReaction direction="left-to-right" evidence="2">
        <dbReference type="Rhea" id="RHEA:44525"/>
    </physiologicalReaction>
</comment>
<comment type="catalytic activity">
    <reaction evidence="9">
        <text>N-hexadecanoyl-1,2-di-(9Z-octadecenoyl)-sn-glycero-3-phosphoethanolamine + H2O = N-hexadecanoyl-1-(9Z-octadecenoyl)-sn-glycero-3-phosphoethanolamine + (9Z)-octadecenoate + H(+)</text>
        <dbReference type="Rhea" id="RHEA:45424"/>
        <dbReference type="ChEBI" id="CHEBI:15377"/>
        <dbReference type="ChEBI" id="CHEBI:15378"/>
        <dbReference type="ChEBI" id="CHEBI:30823"/>
        <dbReference type="ChEBI" id="CHEBI:78097"/>
        <dbReference type="ChEBI" id="CHEBI:85217"/>
    </reaction>
    <physiologicalReaction direction="left-to-right" evidence="16">
        <dbReference type="Rhea" id="RHEA:45425"/>
    </physiologicalReaction>
</comment>
<comment type="catalytic activity">
    <reaction evidence="11">
        <text>1'-[1,2-di-(9Z-octadecenoyl)-sn-glycero-3-phospho]-3'-[1-(9Z-octadecenoyl)-sn-glycero-3-phospho]-glycerol + H2O = 1',3'-bis-[1-(9Z-octadecenoyl)-sn-glycero-3-phospho]-glycerol + (9Z)-octadecenoate + H(+)</text>
        <dbReference type="Rhea" id="RHEA:40467"/>
        <dbReference type="ChEBI" id="CHEBI:15377"/>
        <dbReference type="ChEBI" id="CHEBI:15378"/>
        <dbReference type="ChEBI" id="CHEBI:30823"/>
        <dbReference type="ChEBI" id="CHEBI:77256"/>
        <dbReference type="ChEBI" id="CHEBI:77259"/>
    </reaction>
    <physiologicalReaction direction="left-to-right" evidence="17">
        <dbReference type="Rhea" id="RHEA:40468"/>
    </physiologicalReaction>
</comment>
<comment type="catalytic activity">
    <reaction evidence="11">
        <text>1',3'-bis[1,2-di-(9Z-octadecenoyl)-sn-glycero-3-phospho]-glycerol + H2O = 1'-[1,2-di-(9Z-octadecenoyl)-sn-glycero-3-phospho]-3'-[1-(9Z-octadecenoyl)-sn-glycero-3-phospho]-glycerol + (9Z)-octadecenoate + H(+)</text>
        <dbReference type="Rhea" id="RHEA:40463"/>
        <dbReference type="ChEBI" id="CHEBI:15377"/>
        <dbReference type="ChEBI" id="CHEBI:15378"/>
        <dbReference type="ChEBI" id="CHEBI:30823"/>
        <dbReference type="ChEBI" id="CHEBI:77253"/>
        <dbReference type="ChEBI" id="CHEBI:77259"/>
    </reaction>
    <physiologicalReaction direction="left-to-right" evidence="17">
        <dbReference type="Rhea" id="RHEA:40464"/>
    </physiologicalReaction>
</comment>
<comment type="cofactor">
    <cofactor evidence="1">
        <name>Ca(2+)</name>
        <dbReference type="ChEBI" id="CHEBI:29108"/>
    </cofactor>
    <text evidence="1">Binds 1 Ca(2+) ion per subunit.</text>
</comment>
<comment type="activity regulation">
    <text evidence="11">Activated by cardiolipin.</text>
</comment>
<comment type="biophysicochemical properties">
    <phDependence>
        <text evidence="14">Optimum pH is 6.5. Activity remains high up to pH 9.0.</text>
    </phDependence>
</comment>
<comment type="pathway">
    <text evidence="13">Lipid metabolism; phospholipid metabolism.</text>
</comment>
<comment type="pathway">
    <text evidence="7">Lipid metabolism; leukotriene B4 biosynthesis.</text>
</comment>
<comment type="pathway">
    <text evidence="8">Lipid metabolism; leukotriene C4 biosynthesis.</text>
</comment>
<comment type="subcellular location">
    <subcellularLocation>
        <location evidence="14">Secreted</location>
    </subcellularLocation>
    <subcellularLocation>
        <location evidence="2">Cell membrane</location>
    </subcellularLocation>
    <subcellularLocation>
        <location evidence="2">Cytoplasmic vesicle</location>
        <location evidence="2">Phagosome</location>
    </subcellularLocation>
    <subcellularLocation>
        <location evidence="2">Recycling endosome</location>
    </subcellularLocation>
    <subcellularLocation>
        <location evidence="2">Golgi apparatus</location>
        <location evidence="2">cis-Golgi network</location>
    </subcellularLocation>
    <subcellularLocation>
        <location evidence="2">Golgi apparatus</location>
        <location evidence="2">trans-Golgi network</location>
    </subcellularLocation>
</comment>
<comment type="tissue specificity">
    <text evidence="10 13">Heart, placenta and less abundantly, in lung. Detected in the outer and inner plexiform layers of the retina (at protein level) (PubMed:22137173). Expressed in monocytes and macrophages (PubMed:25725101).</text>
</comment>
<comment type="induction">
    <text evidence="13">Up-regulated upon M2 macrophage polarization in response to IL4, CSF1 or IL10.</text>
</comment>
<comment type="PTM">
    <text>This enzyme lacks one of the seven disulfide bonds found in similar PLA2 proteins.</text>
</comment>
<comment type="disease" evidence="10 12">
    <disease id="DI-03359">
        <name>Fleck retina, familial benign</name>
        <acronym>FRFB</acronym>
        <description>An autosomal recessive condition associated with a distinctive retinal appearance and no apparent visual or electrophysiologic deficits. Affected individuals are asymptomatic, but fundus examination reveals a striking pattern of diffuse, yellow-white, fleck-like lesions extending to the far periphery of the retina but sparing the foveal region.</description>
        <dbReference type="MIM" id="228980"/>
    </disease>
    <text>The disease is caused by variants affecting the gene represented in this entry.</text>
</comment>
<comment type="similarity">
    <text evidence="15">Belongs to the phospholipase A2 family.</text>
</comment>
<organism>
    <name type="scientific">Homo sapiens</name>
    <name type="common">Human</name>
    <dbReference type="NCBI Taxonomy" id="9606"/>
    <lineage>
        <taxon>Eukaryota</taxon>
        <taxon>Metazoa</taxon>
        <taxon>Chordata</taxon>
        <taxon>Craniata</taxon>
        <taxon>Vertebrata</taxon>
        <taxon>Euteleostomi</taxon>
        <taxon>Mammalia</taxon>
        <taxon>Eutheria</taxon>
        <taxon>Euarchontoglires</taxon>
        <taxon>Primates</taxon>
        <taxon>Haplorrhini</taxon>
        <taxon>Catarrhini</taxon>
        <taxon>Hominidae</taxon>
        <taxon>Homo</taxon>
    </lineage>
</organism>
<proteinExistence type="evidence at protein level"/>
<keyword id="KW-0106">Calcium</keyword>
<keyword id="KW-1003">Cell membrane</keyword>
<keyword id="KW-0968">Cytoplasmic vesicle</keyword>
<keyword id="KW-0225">Disease variant</keyword>
<keyword id="KW-1015">Disulfide bond</keyword>
<keyword id="KW-0967">Endosome</keyword>
<keyword id="KW-0276">Fatty acid metabolism</keyword>
<keyword id="KW-0333">Golgi apparatus</keyword>
<keyword id="KW-0378">Hydrolase</keyword>
<keyword id="KW-0442">Lipid degradation</keyword>
<keyword id="KW-0443">Lipid metabolism</keyword>
<keyword id="KW-0472">Membrane</keyword>
<keyword id="KW-0479">Metal-binding</keyword>
<keyword id="KW-0581">Phagocytosis</keyword>
<keyword id="KW-0595">Phospholipid degradation</keyword>
<keyword id="KW-1208">Phospholipid metabolism</keyword>
<keyword id="KW-1267">Proteomics identification</keyword>
<keyword id="KW-1185">Reference proteome</keyword>
<keyword id="KW-0964">Secreted</keyword>
<keyword id="KW-0732">Signal</keyword>
<accession>P39877</accession>
<accession>Q8N435</accession>
<gene>
    <name type="primary">PLA2G5</name>
</gene>
<dbReference type="EC" id="3.1.1.4" evidence="11 14"/>
<dbReference type="EMBL" id="U03090">
    <property type="protein sequence ID" value="AAC28886.1"/>
    <property type="molecule type" value="mRNA"/>
</dbReference>
<dbReference type="EMBL" id="AY524778">
    <property type="protein sequence ID" value="AAR92480.1"/>
    <property type="molecule type" value="Genomic_DNA"/>
</dbReference>
<dbReference type="EMBL" id="AL158172">
    <property type="status" value="NOT_ANNOTATED_CDS"/>
    <property type="molecule type" value="Genomic_DNA"/>
</dbReference>
<dbReference type="EMBL" id="BC036792">
    <property type="protein sequence ID" value="AAH36792.2"/>
    <property type="molecule type" value="mRNA"/>
</dbReference>
<dbReference type="CCDS" id="CCDS202.1"/>
<dbReference type="PIR" id="A49959">
    <property type="entry name" value="A49959"/>
</dbReference>
<dbReference type="RefSeq" id="NP_000920.1">
    <property type="nucleotide sequence ID" value="NM_000929.3"/>
</dbReference>
<dbReference type="RefSeq" id="XP_005245950.1">
    <property type="nucleotide sequence ID" value="XM_005245893.6"/>
</dbReference>
<dbReference type="RefSeq" id="XP_011539889.1">
    <property type="nucleotide sequence ID" value="XM_011541587.4"/>
</dbReference>
<dbReference type="RefSeq" id="XP_011539890.1">
    <property type="nucleotide sequence ID" value="XM_011541588.4"/>
</dbReference>
<dbReference type="RefSeq" id="XP_011539891.1">
    <property type="nucleotide sequence ID" value="XM_011541589.4"/>
</dbReference>
<dbReference type="RefSeq" id="XP_011539892.1">
    <property type="nucleotide sequence ID" value="XM_011541590.4"/>
</dbReference>
<dbReference type="RefSeq" id="XP_011539893.1">
    <property type="nucleotide sequence ID" value="XM_011541591.4"/>
</dbReference>
<dbReference type="RefSeq" id="XP_011539894.1">
    <property type="nucleotide sequence ID" value="XM_011541592.4"/>
</dbReference>
<dbReference type="RefSeq" id="XP_047278591.1">
    <property type="nucleotide sequence ID" value="XM_047422635.1"/>
</dbReference>
<dbReference type="RefSeq" id="XP_047278593.1">
    <property type="nucleotide sequence ID" value="XM_047422637.1"/>
</dbReference>
<dbReference type="RefSeq" id="XP_047278599.1">
    <property type="nucleotide sequence ID" value="XM_047422643.1"/>
</dbReference>
<dbReference type="RefSeq" id="XP_047278601.1">
    <property type="nucleotide sequence ID" value="XM_047422645.1"/>
</dbReference>
<dbReference type="RefSeq" id="XP_054193061.1">
    <property type="nucleotide sequence ID" value="XM_054337086.1"/>
</dbReference>
<dbReference type="RefSeq" id="XP_054193062.1">
    <property type="nucleotide sequence ID" value="XM_054337087.1"/>
</dbReference>
<dbReference type="RefSeq" id="XP_054193063.1">
    <property type="nucleotide sequence ID" value="XM_054337088.1"/>
</dbReference>
<dbReference type="RefSeq" id="XP_054193064.1">
    <property type="nucleotide sequence ID" value="XM_054337089.1"/>
</dbReference>
<dbReference type="RefSeq" id="XP_054193065.1">
    <property type="nucleotide sequence ID" value="XM_054337090.1"/>
</dbReference>
<dbReference type="RefSeq" id="XP_054193066.1">
    <property type="nucleotide sequence ID" value="XM_054337091.1"/>
</dbReference>
<dbReference type="RefSeq" id="XP_054193067.1">
    <property type="nucleotide sequence ID" value="XM_054337092.1"/>
</dbReference>
<dbReference type="SMR" id="P39877"/>
<dbReference type="BioGRID" id="111339">
    <property type="interactions" value="30"/>
</dbReference>
<dbReference type="FunCoup" id="P39877">
    <property type="interactions" value="490"/>
</dbReference>
<dbReference type="IntAct" id="P39877">
    <property type="interactions" value="9"/>
</dbReference>
<dbReference type="STRING" id="9606.ENSP00000364249"/>
<dbReference type="BindingDB" id="P39877"/>
<dbReference type="ChEMBL" id="CHEMBL4323"/>
<dbReference type="GuidetoPHARMACOLOGY" id="1430"/>
<dbReference type="SwissLipids" id="SLP:000000140"/>
<dbReference type="BioMuta" id="PLA2G5"/>
<dbReference type="DMDM" id="730258"/>
<dbReference type="MassIVE" id="P39877"/>
<dbReference type="PaxDb" id="9606-ENSP00000364249"/>
<dbReference type="PeptideAtlas" id="P39877"/>
<dbReference type="Antibodypedia" id="29758">
    <property type="antibodies" value="150 antibodies from 22 providers"/>
</dbReference>
<dbReference type="DNASU" id="5322"/>
<dbReference type="Ensembl" id="ENST00000375108.4">
    <property type="protein sequence ID" value="ENSP00000364249.3"/>
    <property type="gene ID" value="ENSG00000127472.11"/>
</dbReference>
<dbReference type="GeneID" id="5322"/>
<dbReference type="KEGG" id="hsa:5322"/>
<dbReference type="MANE-Select" id="ENST00000375108.4">
    <property type="protein sequence ID" value="ENSP00000364249.3"/>
    <property type="RefSeq nucleotide sequence ID" value="NM_000929.3"/>
    <property type="RefSeq protein sequence ID" value="NP_000920.1"/>
</dbReference>
<dbReference type="UCSC" id="uc001bcy.4">
    <property type="organism name" value="human"/>
</dbReference>
<dbReference type="AGR" id="HGNC:9038"/>
<dbReference type="CTD" id="5322"/>
<dbReference type="DisGeNET" id="5322"/>
<dbReference type="GeneCards" id="PLA2G5"/>
<dbReference type="HGNC" id="HGNC:9038">
    <property type="gene designation" value="PLA2G5"/>
</dbReference>
<dbReference type="HPA" id="ENSG00000127472">
    <property type="expression patterns" value="Tissue enhanced (choroid plexus, heart muscle)"/>
</dbReference>
<dbReference type="MalaCards" id="PLA2G5"/>
<dbReference type="MIM" id="228980">
    <property type="type" value="phenotype"/>
</dbReference>
<dbReference type="MIM" id="601192">
    <property type="type" value="gene"/>
</dbReference>
<dbReference type="neXtProt" id="NX_P39877"/>
<dbReference type="OpenTargets" id="ENSG00000127472"/>
<dbReference type="Orphanet" id="363989">
    <property type="disease" value="Familial benign flecked retina"/>
</dbReference>
<dbReference type="PharmGKB" id="PA33366"/>
<dbReference type="VEuPathDB" id="HostDB:ENSG00000127472"/>
<dbReference type="eggNOG" id="KOG4087">
    <property type="taxonomic scope" value="Eukaryota"/>
</dbReference>
<dbReference type="GeneTree" id="ENSGT00940000162222"/>
<dbReference type="HOGENOM" id="CLU_090683_3_0_1"/>
<dbReference type="InParanoid" id="P39877"/>
<dbReference type="OMA" id="WVHDRCY"/>
<dbReference type="OrthoDB" id="5841574at2759"/>
<dbReference type="PAN-GO" id="P39877">
    <property type="GO annotations" value="5 GO annotations based on evolutionary models"/>
</dbReference>
<dbReference type="PhylomeDB" id="P39877"/>
<dbReference type="TreeFam" id="TF319283"/>
<dbReference type="PathwayCommons" id="P39877"/>
<dbReference type="Reactome" id="R-HSA-1482788">
    <property type="pathway name" value="Acyl chain remodelling of PC"/>
</dbReference>
<dbReference type="Reactome" id="R-HSA-1482801">
    <property type="pathway name" value="Acyl chain remodelling of PS"/>
</dbReference>
<dbReference type="Reactome" id="R-HSA-1482839">
    <property type="pathway name" value="Acyl chain remodelling of PE"/>
</dbReference>
<dbReference type="Reactome" id="R-HSA-1482922">
    <property type="pathway name" value="Acyl chain remodelling of PI"/>
</dbReference>
<dbReference type="Reactome" id="R-HSA-1482925">
    <property type="pathway name" value="Acyl chain remodelling of PG"/>
</dbReference>
<dbReference type="Reactome" id="R-HSA-1483166">
    <property type="pathway name" value="Synthesis of PA"/>
</dbReference>
<dbReference type="SignaLink" id="P39877"/>
<dbReference type="UniPathway" id="UPA00085"/>
<dbReference type="UniPathway" id="UPA00878"/>
<dbReference type="UniPathway" id="UPA00879"/>
<dbReference type="BioGRID-ORCS" id="5322">
    <property type="hits" value="15 hits in 1149 CRISPR screens"/>
</dbReference>
<dbReference type="ChiTaRS" id="PLA2G5">
    <property type="organism name" value="human"/>
</dbReference>
<dbReference type="GeneWiki" id="PLA2G5"/>
<dbReference type="GenomeRNAi" id="5322"/>
<dbReference type="Pharos" id="P39877">
    <property type="development level" value="Tchem"/>
</dbReference>
<dbReference type="PRO" id="PR:P39877"/>
<dbReference type="Proteomes" id="UP000005640">
    <property type="component" value="Chromosome 1"/>
</dbReference>
<dbReference type="RNAct" id="P39877">
    <property type="molecule type" value="protein"/>
</dbReference>
<dbReference type="Bgee" id="ENSG00000127472">
    <property type="expression patterns" value="Expressed in right atrium auricular region and 130 other cell types or tissues"/>
</dbReference>
<dbReference type="GO" id="GO:0032009">
    <property type="term" value="C:early phagosome"/>
    <property type="evidence" value="ECO:0000250"/>
    <property type="project" value="UniProtKB"/>
</dbReference>
<dbReference type="GO" id="GO:0005576">
    <property type="term" value="C:extracellular region"/>
    <property type="evidence" value="ECO:0000304"/>
    <property type="project" value="Reactome"/>
</dbReference>
<dbReference type="GO" id="GO:0005794">
    <property type="term" value="C:Golgi apparatus"/>
    <property type="evidence" value="ECO:0007669"/>
    <property type="project" value="UniProtKB-SubCell"/>
</dbReference>
<dbReference type="GO" id="GO:0032010">
    <property type="term" value="C:phagolysosome"/>
    <property type="evidence" value="ECO:0000250"/>
    <property type="project" value="UniProtKB"/>
</dbReference>
<dbReference type="GO" id="GO:0005886">
    <property type="term" value="C:plasma membrane"/>
    <property type="evidence" value="ECO:0007669"/>
    <property type="project" value="UniProtKB-SubCell"/>
</dbReference>
<dbReference type="GO" id="GO:0055037">
    <property type="term" value="C:recycling endosome"/>
    <property type="evidence" value="ECO:0007669"/>
    <property type="project" value="UniProtKB-SubCell"/>
</dbReference>
<dbReference type="GO" id="GO:0005509">
    <property type="term" value="F:calcium ion binding"/>
    <property type="evidence" value="ECO:0000318"/>
    <property type="project" value="GO_Central"/>
</dbReference>
<dbReference type="GO" id="GO:0047498">
    <property type="term" value="F:calcium-dependent phospholipase A2 activity"/>
    <property type="evidence" value="ECO:0000318"/>
    <property type="project" value="GO_Central"/>
</dbReference>
<dbReference type="GO" id="GO:0047499">
    <property type="term" value="F:calcium-independent phospholipase A2 activity"/>
    <property type="evidence" value="ECO:0000314"/>
    <property type="project" value="UniProtKB"/>
</dbReference>
<dbReference type="GO" id="GO:0005543">
    <property type="term" value="F:phospholipid binding"/>
    <property type="evidence" value="ECO:0000318"/>
    <property type="project" value="GO_Central"/>
</dbReference>
<dbReference type="GO" id="GO:0050482">
    <property type="term" value="P:arachidonate secretion"/>
    <property type="evidence" value="ECO:0007669"/>
    <property type="project" value="InterPro"/>
</dbReference>
<dbReference type="GO" id="GO:0006631">
    <property type="term" value="P:fatty acid metabolic process"/>
    <property type="evidence" value="ECO:0007669"/>
    <property type="project" value="UniProtKB-KW"/>
</dbReference>
<dbReference type="GO" id="GO:0019370">
    <property type="term" value="P:leukotriene biosynthetic process"/>
    <property type="evidence" value="ECO:0000314"/>
    <property type="project" value="UniProtKB"/>
</dbReference>
<dbReference type="GO" id="GO:0034374">
    <property type="term" value="P:low-density lipoprotein particle remodeling"/>
    <property type="evidence" value="ECO:0000250"/>
    <property type="project" value="UniProtKB"/>
</dbReference>
<dbReference type="GO" id="GO:0042130">
    <property type="term" value="P:negative regulation of T cell proliferation"/>
    <property type="evidence" value="ECO:0000318"/>
    <property type="project" value="GO_Central"/>
</dbReference>
<dbReference type="GO" id="GO:0090385">
    <property type="term" value="P:phagosome-lysosome fusion"/>
    <property type="evidence" value="ECO:0000250"/>
    <property type="project" value="UniProtKB"/>
</dbReference>
<dbReference type="GO" id="GO:0034638">
    <property type="term" value="P:phosphatidylcholine catabolic process"/>
    <property type="evidence" value="ECO:0000314"/>
    <property type="project" value="UniProtKB"/>
</dbReference>
<dbReference type="GO" id="GO:0046470">
    <property type="term" value="P:phosphatidylcholine metabolic process"/>
    <property type="evidence" value="ECO:0000318"/>
    <property type="project" value="GO_Central"/>
</dbReference>
<dbReference type="GO" id="GO:0046471">
    <property type="term" value="P:phosphatidylglycerol metabolic process"/>
    <property type="evidence" value="ECO:0000318"/>
    <property type="project" value="GO_Central"/>
</dbReference>
<dbReference type="GO" id="GO:0006644">
    <property type="term" value="P:phospholipid metabolic process"/>
    <property type="evidence" value="ECO:0000304"/>
    <property type="project" value="ProtInc"/>
</dbReference>
<dbReference type="GO" id="GO:1905036">
    <property type="term" value="P:positive regulation of antifungal innate immune response"/>
    <property type="evidence" value="ECO:0000250"/>
    <property type="project" value="UniProtKB"/>
</dbReference>
<dbReference type="GO" id="GO:0070374">
    <property type="term" value="P:positive regulation of ERK1 and ERK2 cascade"/>
    <property type="evidence" value="ECO:0000314"/>
    <property type="project" value="CACAO"/>
</dbReference>
<dbReference type="GO" id="GO:0090265">
    <property type="term" value="P:positive regulation of immune complex clearance by monocytes and macrophages"/>
    <property type="evidence" value="ECO:0000314"/>
    <property type="project" value="UniProtKB"/>
</dbReference>
<dbReference type="GO" id="GO:0010744">
    <property type="term" value="P:positive regulation of macrophage derived foam cell differentiation"/>
    <property type="evidence" value="ECO:0000250"/>
    <property type="project" value="UniProtKB"/>
</dbReference>
<dbReference type="GO" id="GO:1903028">
    <property type="term" value="P:positive regulation of opsonization"/>
    <property type="evidence" value="ECO:0000250"/>
    <property type="project" value="UniProtKB"/>
</dbReference>
<dbReference type="GO" id="GO:0050766">
    <property type="term" value="P:positive regulation of phagocytosis"/>
    <property type="evidence" value="ECO:0000250"/>
    <property type="project" value="UniProtKB"/>
</dbReference>
<dbReference type="GO" id="GO:1905164">
    <property type="term" value="P:positive regulation of phagosome maturation"/>
    <property type="evidence" value="ECO:0000250"/>
    <property type="project" value="UniProtKB"/>
</dbReference>
<dbReference type="GO" id="GO:0010518">
    <property type="term" value="P:positive regulation of phospholipase activity"/>
    <property type="evidence" value="ECO:0000314"/>
    <property type="project" value="CACAO"/>
</dbReference>
<dbReference type="CDD" id="cd00125">
    <property type="entry name" value="PLA2c"/>
    <property type="match status" value="1"/>
</dbReference>
<dbReference type="FunFam" id="1.20.90.10:FF:000001">
    <property type="entry name" value="Basic phospholipase A2 homolog"/>
    <property type="match status" value="1"/>
</dbReference>
<dbReference type="Gene3D" id="1.20.90.10">
    <property type="entry name" value="Phospholipase A2 domain"/>
    <property type="match status" value="1"/>
</dbReference>
<dbReference type="InterPro" id="IPR001211">
    <property type="entry name" value="PLipase_A2"/>
</dbReference>
<dbReference type="InterPro" id="IPR033112">
    <property type="entry name" value="PLipase_A2_Asp_AS"/>
</dbReference>
<dbReference type="InterPro" id="IPR016090">
    <property type="entry name" value="PLipase_A2_dom"/>
</dbReference>
<dbReference type="InterPro" id="IPR036444">
    <property type="entry name" value="PLipase_A2_dom_sf"/>
</dbReference>
<dbReference type="InterPro" id="IPR033113">
    <property type="entry name" value="PLipase_A2_His_AS"/>
</dbReference>
<dbReference type="PANTHER" id="PTHR11716">
    <property type="entry name" value="PHOSPHOLIPASE A2 FAMILY MEMBER"/>
    <property type="match status" value="1"/>
</dbReference>
<dbReference type="PANTHER" id="PTHR11716:SF10">
    <property type="entry name" value="PHOSPHOLIPASE A2 GROUP V"/>
    <property type="match status" value="1"/>
</dbReference>
<dbReference type="Pfam" id="PF00068">
    <property type="entry name" value="Phospholip_A2_1"/>
    <property type="match status" value="1"/>
</dbReference>
<dbReference type="PRINTS" id="PR00389">
    <property type="entry name" value="PHPHLIPASEA2"/>
</dbReference>
<dbReference type="SMART" id="SM00085">
    <property type="entry name" value="PA2c"/>
    <property type="match status" value="1"/>
</dbReference>
<dbReference type="SUPFAM" id="SSF48619">
    <property type="entry name" value="Phospholipase A2, PLA2"/>
    <property type="match status" value="1"/>
</dbReference>
<dbReference type="PROSITE" id="PS00119">
    <property type="entry name" value="PA2_ASP"/>
    <property type="match status" value="1"/>
</dbReference>
<dbReference type="PROSITE" id="PS00118">
    <property type="entry name" value="PA2_HIS"/>
    <property type="match status" value="1"/>
</dbReference>
<sequence length="138" mass="15674">MKGLLPLAWFLACSVPAVQGGLLDLKSMIEKVTGKNALTNYGFYGCYCGWGGRGTPKDGTDWCCWAHDHCYGRLEEKGCNIRTQSYKYRFAWGVVTCEPGPFCHVNLCACDRKLVYCLKRNLRSYNPQYQYFPNILCS</sequence>
<protein>
    <recommendedName>
        <fullName>Phospholipase A2 group V</fullName>
        <ecNumber evidence="11 14">3.1.1.4</ecNumber>
    </recommendedName>
    <alternativeName>
        <fullName>PLA2-10</fullName>
    </alternativeName>
    <alternativeName>
        <fullName>Phosphatidylcholine 2-acylhydrolase 5</fullName>
    </alternativeName>
</protein>
<reference key="1">
    <citation type="journal article" date="1994" name="J. Biol. Chem.">
        <title>Cloning and recombinant expression of a novel human low molecular weight Ca(2+)-dependent phospholipase A2.</title>
        <authorList>
            <person name="Chen J."/>
            <person name="Engle S.J."/>
            <person name="Seilhamer J.J."/>
            <person name="Tischfield J.A."/>
        </authorList>
    </citation>
    <scope>NUCLEOTIDE SEQUENCE [MRNA]</scope>
    <scope>FUNCTION</scope>
    <scope>CATALYTIC ACTIVITY</scope>
    <scope>SUBCELLULAR LOCATION</scope>
    <scope>BIOPHYSICOCHEMICAL PROPERTIES</scope>
    <source>
        <tissue>Stomach</tissue>
    </source>
</reference>
<reference key="2">
    <citation type="submission" date="2004-01" db="EMBL/GenBank/DDBJ databases">
        <authorList>
            <consortium name="NIEHS SNPs program"/>
        </authorList>
    </citation>
    <scope>NUCLEOTIDE SEQUENCE [GENOMIC DNA]</scope>
</reference>
<reference key="3">
    <citation type="journal article" date="2006" name="Nature">
        <title>The DNA sequence and biological annotation of human chromosome 1.</title>
        <authorList>
            <person name="Gregory S.G."/>
            <person name="Barlow K.F."/>
            <person name="McLay K.E."/>
            <person name="Kaul R."/>
            <person name="Swarbreck D."/>
            <person name="Dunham A."/>
            <person name="Scott C.E."/>
            <person name="Howe K.L."/>
            <person name="Woodfine K."/>
            <person name="Spencer C.C.A."/>
            <person name="Jones M.C."/>
            <person name="Gillson C."/>
            <person name="Searle S."/>
            <person name="Zhou Y."/>
            <person name="Kokocinski F."/>
            <person name="McDonald L."/>
            <person name="Evans R."/>
            <person name="Phillips K."/>
            <person name="Atkinson A."/>
            <person name="Cooper R."/>
            <person name="Jones C."/>
            <person name="Hall R.E."/>
            <person name="Andrews T.D."/>
            <person name="Lloyd C."/>
            <person name="Ainscough R."/>
            <person name="Almeida J.P."/>
            <person name="Ambrose K.D."/>
            <person name="Anderson F."/>
            <person name="Andrew R.W."/>
            <person name="Ashwell R.I.S."/>
            <person name="Aubin K."/>
            <person name="Babbage A.K."/>
            <person name="Bagguley C.L."/>
            <person name="Bailey J."/>
            <person name="Beasley H."/>
            <person name="Bethel G."/>
            <person name="Bird C.P."/>
            <person name="Bray-Allen S."/>
            <person name="Brown J.Y."/>
            <person name="Brown A.J."/>
            <person name="Buckley D."/>
            <person name="Burton J."/>
            <person name="Bye J."/>
            <person name="Carder C."/>
            <person name="Chapman J.C."/>
            <person name="Clark S.Y."/>
            <person name="Clarke G."/>
            <person name="Clee C."/>
            <person name="Cobley V."/>
            <person name="Collier R.E."/>
            <person name="Corby N."/>
            <person name="Coville G.J."/>
            <person name="Davies J."/>
            <person name="Deadman R."/>
            <person name="Dunn M."/>
            <person name="Earthrowl M."/>
            <person name="Ellington A.G."/>
            <person name="Errington H."/>
            <person name="Frankish A."/>
            <person name="Frankland J."/>
            <person name="French L."/>
            <person name="Garner P."/>
            <person name="Garnett J."/>
            <person name="Gay L."/>
            <person name="Ghori M.R.J."/>
            <person name="Gibson R."/>
            <person name="Gilby L.M."/>
            <person name="Gillett W."/>
            <person name="Glithero R.J."/>
            <person name="Grafham D.V."/>
            <person name="Griffiths C."/>
            <person name="Griffiths-Jones S."/>
            <person name="Grocock R."/>
            <person name="Hammond S."/>
            <person name="Harrison E.S.I."/>
            <person name="Hart E."/>
            <person name="Haugen E."/>
            <person name="Heath P.D."/>
            <person name="Holmes S."/>
            <person name="Holt K."/>
            <person name="Howden P.J."/>
            <person name="Hunt A.R."/>
            <person name="Hunt S.E."/>
            <person name="Hunter G."/>
            <person name="Isherwood J."/>
            <person name="James R."/>
            <person name="Johnson C."/>
            <person name="Johnson D."/>
            <person name="Joy A."/>
            <person name="Kay M."/>
            <person name="Kershaw J.K."/>
            <person name="Kibukawa M."/>
            <person name="Kimberley A.M."/>
            <person name="King A."/>
            <person name="Knights A.J."/>
            <person name="Lad H."/>
            <person name="Laird G."/>
            <person name="Lawlor S."/>
            <person name="Leongamornlert D.A."/>
            <person name="Lloyd D.M."/>
            <person name="Loveland J."/>
            <person name="Lovell J."/>
            <person name="Lush M.J."/>
            <person name="Lyne R."/>
            <person name="Martin S."/>
            <person name="Mashreghi-Mohammadi M."/>
            <person name="Matthews L."/>
            <person name="Matthews N.S.W."/>
            <person name="McLaren S."/>
            <person name="Milne S."/>
            <person name="Mistry S."/>
            <person name="Moore M.J.F."/>
            <person name="Nickerson T."/>
            <person name="O'Dell C.N."/>
            <person name="Oliver K."/>
            <person name="Palmeiri A."/>
            <person name="Palmer S.A."/>
            <person name="Parker A."/>
            <person name="Patel D."/>
            <person name="Pearce A.V."/>
            <person name="Peck A.I."/>
            <person name="Pelan S."/>
            <person name="Phelps K."/>
            <person name="Phillimore B.J."/>
            <person name="Plumb R."/>
            <person name="Rajan J."/>
            <person name="Raymond C."/>
            <person name="Rouse G."/>
            <person name="Saenphimmachak C."/>
            <person name="Sehra H.K."/>
            <person name="Sheridan E."/>
            <person name="Shownkeen R."/>
            <person name="Sims S."/>
            <person name="Skuce C.D."/>
            <person name="Smith M."/>
            <person name="Steward C."/>
            <person name="Subramanian S."/>
            <person name="Sycamore N."/>
            <person name="Tracey A."/>
            <person name="Tromans A."/>
            <person name="Van Helmond Z."/>
            <person name="Wall M."/>
            <person name="Wallis J.M."/>
            <person name="White S."/>
            <person name="Whitehead S.L."/>
            <person name="Wilkinson J.E."/>
            <person name="Willey D.L."/>
            <person name="Williams H."/>
            <person name="Wilming L."/>
            <person name="Wray P.W."/>
            <person name="Wu Z."/>
            <person name="Coulson A."/>
            <person name="Vaudin M."/>
            <person name="Sulston J.E."/>
            <person name="Durbin R.M."/>
            <person name="Hubbard T."/>
            <person name="Wooster R."/>
            <person name="Dunham I."/>
            <person name="Carter N.P."/>
            <person name="McVean G."/>
            <person name="Ross M.T."/>
            <person name="Harrow J."/>
            <person name="Olson M.V."/>
            <person name="Beck S."/>
            <person name="Rogers J."/>
            <person name="Bentley D.R."/>
        </authorList>
    </citation>
    <scope>NUCLEOTIDE SEQUENCE [LARGE SCALE GENOMIC DNA]</scope>
</reference>
<reference key="4">
    <citation type="journal article" date="2004" name="Genome Res.">
        <title>The status, quality, and expansion of the NIH full-length cDNA project: the Mammalian Gene Collection (MGC).</title>
        <authorList>
            <consortium name="The MGC Project Team"/>
        </authorList>
    </citation>
    <scope>NUCLEOTIDE SEQUENCE [LARGE SCALE MRNA]</scope>
    <source>
        <tissue>Brain</tissue>
    </source>
</reference>
<reference key="5">
    <citation type="journal article" date="2002" name="J. Biol. Chem.">
        <title>Bactericidal properties of human and murine groups I, II, V, X, and XII secreted phospholipases A(2).</title>
        <authorList>
            <person name="Koduri R.S."/>
            <person name="Groenroos J.O."/>
            <person name="Laine V.J."/>
            <person name="Le Calvez C."/>
            <person name="Lambeau G."/>
            <person name="Nevalainen T.J."/>
            <person name="Gelb M.H."/>
        </authorList>
    </citation>
    <scope>FUNCTION</scope>
</reference>
<reference key="6">
    <citation type="journal article" date="2002" name="J. Biol. Chem.">
        <title>Group V phospholipase A2 induces leukotriene biosynthesis in human neutrophils through the activation of group IVA phospholipase A2.</title>
        <authorList>
            <person name="Kim Y.J."/>
            <person name="Kim K.P."/>
            <person name="Han S.K."/>
            <person name="Munoz N.M."/>
            <person name="Zhu X."/>
            <person name="Sano H."/>
            <person name="Leff A.R."/>
            <person name="Cho W."/>
        </authorList>
    </citation>
    <scope>FUNCTION</scope>
    <scope>PATHWAY</scope>
</reference>
<reference key="7">
    <citation type="journal article" date="2003" name="J. Biol. Chem.">
        <title>Human group V phospholipase A2 induces group IVA phospholipase A2-independent cysteinyl leukotriene synthesis in human eosinophils.</title>
        <authorList>
            <person name="Munoz N.M."/>
            <person name="Kim Y.J."/>
            <person name="Meliton A.Y."/>
            <person name="Kim K.P."/>
            <person name="Han S.K."/>
            <person name="Boetticher E."/>
            <person name="O'Leary E."/>
            <person name="Myou S."/>
            <person name="Zhu X."/>
            <person name="Bonventre J.V."/>
            <person name="Leff A.R."/>
            <person name="Cho W."/>
        </authorList>
    </citation>
    <scope>FUNCTION</scope>
    <scope>MUTAGENESIS OF TRP-50; ARG-112 AND LYS-113</scope>
    <scope>PATHWAY</scope>
</reference>
<reference key="8">
    <citation type="journal article" date="2004" name="Biochem. J.">
        <title>Biosynthesis of anandamide and N-palmitoylethanolamine by sequential actions of phospholipase A2 and lysophospholipase D.</title>
        <authorList>
            <person name="Sun Y.X."/>
            <person name="Tsuboi K."/>
            <person name="Okamoto Y."/>
            <person name="Tonai T."/>
            <person name="Murakami M."/>
            <person name="Kudo I."/>
            <person name="Ueda N."/>
        </authorList>
    </citation>
    <scope>FUNCTION</scope>
    <scope>CATALYTIC ACTIVITY</scope>
</reference>
<reference key="9">
    <citation type="journal article" date="2013" name="PLoS ONE">
        <title>Assessing phospholipase A2 activity toward cardiolipin by mass spectrometry.</title>
        <authorList>
            <person name="Hsu Y.H."/>
            <person name="Dumlao D.S."/>
            <person name="Cao J."/>
            <person name="Dennis E.A."/>
        </authorList>
    </citation>
    <scope>FUNCTION</scope>
    <scope>CATALYTIC ACTIVITY</scope>
    <scope>ACTIVITY REGULATION</scope>
</reference>
<reference key="10">
    <citation type="journal article" date="2013" name="PLoS ONE">
        <authorList>
            <person name="Hsu Y.H."/>
            <person name="Dumlao D.S."/>
            <person name="Cao J."/>
            <person name="Dennis E.A."/>
        </authorList>
    </citation>
    <scope>ERRATUM OF PUBMED:23533611</scope>
</reference>
<reference key="11">
    <citation type="journal article" date="2015" name="J. Immunol.">
        <title>Group V secreted phospholipase A2 is upregulated by IL-4 in human macrophages and mediates phagocytosis via hydrolysis of ethanolamine phospholipids.</title>
        <authorList>
            <person name="Rubio J.M."/>
            <person name="Rodriguez J.P."/>
            <person name="Gil-de-Gomez L."/>
            <person name="Guijas C."/>
            <person name="Balboa M.A."/>
            <person name="Balsinde J."/>
        </authorList>
    </citation>
    <scope>FUNCTION</scope>
    <scope>TISSUE SPECIFICITY</scope>
    <scope>INDUCTION BY CYTOKINES</scope>
    <scope>PATHWAY</scope>
</reference>
<reference key="12">
    <citation type="journal article" date="2011" name="Am. J. Hum. Genet.">
        <title>Biallelic mutations in PLA2G5, encoding group V phospholipase A2, cause benign fleck retina.</title>
        <authorList>
            <person name="Sergouniotis P.I."/>
            <person name="Davidson A.E."/>
            <person name="Mackay D.S."/>
            <person name="Lenassi E."/>
            <person name="Li Z."/>
            <person name="Robson A.G."/>
            <person name="Yang X."/>
            <person name="Kam J.H."/>
            <person name="Isaacs T.W."/>
            <person name="Holder G.E."/>
            <person name="Jeffery G."/>
            <person name="Beck J.A."/>
            <person name="Moore A.T."/>
            <person name="Plagnol V."/>
            <person name="Webster A.R."/>
        </authorList>
    </citation>
    <scope>INVOLVEMENT IN FRFB</scope>
    <scope>VARIANTS FRFB CYS-45 AND SER-49</scope>
    <scope>TISSUE SPECIFICITY</scope>
</reference>
<reference key="13">
    <citation type="journal article" date="2015" name="Retina">
        <title>Phospholipase A2 group v in benign familial fleck retina in a set of triplets.</title>
        <authorList>
            <person name="Bin N.J."/>
            <person name="Heng H.M."/>
            <person name="Poh R."/>
            <person name="Noor S.M."/>
            <person name="Subrayan V."/>
        </authorList>
    </citation>
    <scope>INVOLVEMENT IN FRFB</scope>
    <scope>VARIANT FRFB CYS-45</scope>
</reference>
<name>PA2G5_HUMAN</name>
<feature type="signal peptide" evidence="3">
    <location>
        <begin position="1"/>
        <end position="20"/>
    </location>
</feature>
<feature type="chain" id="PRO_0000022761" description="Phospholipase A2 group V">
    <location>
        <begin position="21"/>
        <end position="138"/>
    </location>
</feature>
<feature type="active site" evidence="1">
    <location>
        <position position="67"/>
    </location>
</feature>
<feature type="active site" evidence="1">
    <location>
        <position position="111"/>
    </location>
</feature>
<feature type="binding site" evidence="1">
    <location>
        <position position="47"/>
    </location>
    <ligand>
        <name>Ca(2+)</name>
        <dbReference type="ChEBI" id="CHEBI:29108"/>
    </ligand>
</feature>
<feature type="binding site" evidence="1">
    <location>
        <position position="49"/>
    </location>
    <ligand>
        <name>Ca(2+)</name>
        <dbReference type="ChEBI" id="CHEBI:29108"/>
    </ligand>
</feature>
<feature type="binding site" evidence="1">
    <location>
        <position position="51"/>
    </location>
    <ligand>
        <name>Ca(2+)</name>
        <dbReference type="ChEBI" id="CHEBI:29108"/>
    </ligand>
</feature>
<feature type="binding site" evidence="1">
    <location>
        <position position="68"/>
    </location>
    <ligand>
        <name>Ca(2+)</name>
        <dbReference type="ChEBI" id="CHEBI:29108"/>
    </ligand>
</feature>
<feature type="disulfide bond" evidence="1">
    <location>
        <begin position="46"/>
        <end position="137"/>
    </location>
</feature>
<feature type="disulfide bond" evidence="1">
    <location>
        <begin position="48"/>
        <end position="64"/>
    </location>
</feature>
<feature type="disulfide bond" evidence="1">
    <location>
        <begin position="63"/>
        <end position="117"/>
    </location>
</feature>
<feature type="disulfide bond" evidence="1">
    <location>
        <begin position="70"/>
        <end position="110"/>
    </location>
</feature>
<feature type="disulfide bond" evidence="1">
    <location>
        <begin position="79"/>
        <end position="103"/>
    </location>
</feature>
<feature type="disulfide bond" evidence="1">
    <location>
        <begin position="97"/>
        <end position="108"/>
    </location>
</feature>
<feature type="sequence variant" id="VAR_067343" description="In FRFB; dbSNP:rs387906795." evidence="10 12">
    <original>G</original>
    <variation>C</variation>
    <location>
        <position position="45"/>
    </location>
</feature>
<feature type="sequence variant" id="VAR_067344" description="In FRFB; dbSNP:rs387906796." evidence="10">
    <original>G</original>
    <variation>S</variation>
    <location>
        <position position="49"/>
    </location>
</feature>
<feature type="mutagenesis site" description="Impairs arachidonate release from cell membranes." evidence="8">
    <original>W</original>
    <variation>A</variation>
    <location>
        <position position="50"/>
    </location>
</feature>
<feature type="mutagenesis site" description="Decreases arachidonate release from cell membranes; when associated with E-113." evidence="8">
    <original>R</original>
    <variation>E</variation>
    <location>
        <position position="112"/>
    </location>
</feature>
<feature type="mutagenesis site" description="Decreases arachidonate release from cell membranes; when associated with E-112." evidence="8">
    <original>K</original>
    <variation>E</variation>
    <location>
        <position position="113"/>
    </location>
</feature>